<gene>
    <name type="ordered locus">MT1307</name>
</gene>
<keyword id="KW-1185">Reference proteome</keyword>
<keyword id="KW-0732">Signal</keyword>
<feature type="signal peptide" description="Tat-type signal" evidence="1">
    <location>
        <begin position="1"/>
        <end position="35"/>
    </location>
</feature>
<feature type="chain" id="PRO_0000427368" description="Protein MT1307">
    <location>
        <begin position="36"/>
        <end position="124"/>
    </location>
</feature>
<protein>
    <recommendedName>
        <fullName>Protein MT1307</fullName>
    </recommendedName>
</protein>
<organism>
    <name type="scientific">Mycobacterium tuberculosis (strain CDC 1551 / Oshkosh)</name>
    <dbReference type="NCBI Taxonomy" id="83331"/>
    <lineage>
        <taxon>Bacteria</taxon>
        <taxon>Bacillati</taxon>
        <taxon>Actinomycetota</taxon>
        <taxon>Actinomycetes</taxon>
        <taxon>Mycobacteriales</taxon>
        <taxon>Mycobacteriaceae</taxon>
        <taxon>Mycobacterium</taxon>
        <taxon>Mycobacterium tuberculosis complex</taxon>
    </lineage>
</organism>
<proteinExistence type="inferred from homology"/>
<accession>P9WM44</accession>
<accession>L0T7S6</accession>
<accession>P0A5E1</accession>
<accession>Q11050</accession>
<evidence type="ECO:0000255" key="1">
    <source>
        <dbReference type="PROSITE-ProRule" id="PRU00648"/>
    </source>
</evidence>
<evidence type="ECO:0000305" key="2"/>
<reference key="1">
    <citation type="journal article" date="2002" name="J. Bacteriol.">
        <title>Whole-genome comparison of Mycobacterium tuberculosis clinical and laboratory strains.</title>
        <authorList>
            <person name="Fleischmann R.D."/>
            <person name="Alland D."/>
            <person name="Eisen J.A."/>
            <person name="Carpenter L."/>
            <person name="White O."/>
            <person name="Peterson J.D."/>
            <person name="DeBoy R.T."/>
            <person name="Dodson R.J."/>
            <person name="Gwinn M.L."/>
            <person name="Haft D.H."/>
            <person name="Hickey E.K."/>
            <person name="Kolonay J.F."/>
            <person name="Nelson W.C."/>
            <person name="Umayam L.A."/>
            <person name="Ermolaeva M.D."/>
            <person name="Salzberg S.L."/>
            <person name="Delcher A."/>
            <person name="Utterback T.R."/>
            <person name="Weidman J.F."/>
            <person name="Khouri H.M."/>
            <person name="Gill J."/>
            <person name="Mikula A."/>
            <person name="Bishai W."/>
            <person name="Jacobs W.R. Jr."/>
            <person name="Venter J.C."/>
            <person name="Fraser C.M."/>
        </authorList>
    </citation>
    <scope>NUCLEOTIDE SEQUENCE [LARGE SCALE GENOMIC DNA]</scope>
    <source>
        <strain>CDC 1551 / Oshkosh</strain>
    </source>
</reference>
<sequence>MTTMITLRRRFAVAVAGVATAAATTVTLAPAPANAADVYGAIAYSGNGSWGRSWDYPTRAAAEATAVKSCGYSDCKVLTSFTACGAVAANDRAYQGGVGPTLAAAMKDALTKLGGGYIDTWACN</sequence>
<dbReference type="EMBL" id="AE000516">
    <property type="protein sequence ID" value="AAK45567.1"/>
    <property type="status" value="ALT_INIT"/>
    <property type="molecule type" value="Genomic_DNA"/>
</dbReference>
<dbReference type="PIR" id="E70754">
    <property type="entry name" value="E70754"/>
</dbReference>
<dbReference type="RefSeq" id="WP_003406558.1">
    <property type="nucleotide sequence ID" value="NZ_KK341227.1"/>
</dbReference>
<dbReference type="SMR" id="P9WM44"/>
<dbReference type="KEGG" id="mtc:MT1307"/>
<dbReference type="PATRIC" id="fig|83331.31.peg.1412"/>
<dbReference type="HOGENOM" id="CLU_150616_0_0_11"/>
<dbReference type="Proteomes" id="UP000001020">
    <property type="component" value="Chromosome"/>
</dbReference>
<dbReference type="InterPro" id="IPR025240">
    <property type="entry name" value="DUF4189"/>
</dbReference>
<dbReference type="InterPro" id="IPR006311">
    <property type="entry name" value="TAT_signal"/>
</dbReference>
<dbReference type="Pfam" id="PF13827">
    <property type="entry name" value="DUF4189"/>
    <property type="match status" value="1"/>
</dbReference>
<dbReference type="PROSITE" id="PS51318">
    <property type="entry name" value="TAT"/>
    <property type="match status" value="1"/>
</dbReference>
<comment type="PTM">
    <text>Predicted to be exported by the Tat system. The position of the signal peptide cleavage has not been experimentally proven.</text>
</comment>
<comment type="similarity">
    <text evidence="2">To M.tuberculosis Rv1813c.</text>
</comment>
<comment type="sequence caution" evidence="2">
    <conflict type="erroneous initiation">
        <sequence resource="EMBL-CDS" id="AAK45567"/>
    </conflict>
</comment>
<name>Y1269_MYCTO</name>